<proteinExistence type="inferred from homology"/>
<protein>
    <recommendedName>
        <fullName evidence="1">Imidazole glycerol phosphate synthase subunit HisF</fullName>
        <ecNumber evidence="1">4.3.2.10</ecNumber>
    </recommendedName>
    <alternativeName>
        <fullName evidence="1">IGP synthase cyclase subunit</fullName>
    </alternativeName>
    <alternativeName>
        <fullName evidence="1">IGP synthase subunit HisF</fullName>
    </alternativeName>
    <alternativeName>
        <fullName evidence="1">ImGP synthase subunit HisF</fullName>
        <shortName evidence="1">IGPS subunit HisF</shortName>
    </alternativeName>
</protein>
<comment type="function">
    <text evidence="1">IGPS catalyzes the conversion of PRFAR and glutamine to IGP, AICAR and glutamate. The HisF subunit catalyzes the cyclization activity that produces IGP and AICAR from PRFAR using the ammonia provided by the HisH subunit.</text>
</comment>
<comment type="catalytic activity">
    <reaction evidence="1">
        <text>5-[(5-phospho-1-deoxy-D-ribulos-1-ylimino)methylamino]-1-(5-phospho-beta-D-ribosyl)imidazole-4-carboxamide + L-glutamine = D-erythro-1-(imidazol-4-yl)glycerol 3-phosphate + 5-amino-1-(5-phospho-beta-D-ribosyl)imidazole-4-carboxamide + L-glutamate + H(+)</text>
        <dbReference type="Rhea" id="RHEA:24793"/>
        <dbReference type="ChEBI" id="CHEBI:15378"/>
        <dbReference type="ChEBI" id="CHEBI:29985"/>
        <dbReference type="ChEBI" id="CHEBI:58278"/>
        <dbReference type="ChEBI" id="CHEBI:58359"/>
        <dbReference type="ChEBI" id="CHEBI:58475"/>
        <dbReference type="ChEBI" id="CHEBI:58525"/>
        <dbReference type="EC" id="4.3.2.10"/>
    </reaction>
</comment>
<comment type="pathway">
    <text evidence="1">Amino-acid biosynthesis; L-histidine biosynthesis; L-histidine from 5-phospho-alpha-D-ribose 1-diphosphate: step 5/9.</text>
</comment>
<comment type="subunit">
    <text evidence="1">Heterodimer of HisH and HisF.</text>
</comment>
<comment type="subcellular location">
    <subcellularLocation>
        <location evidence="1">Cytoplasm</location>
    </subcellularLocation>
</comment>
<comment type="similarity">
    <text evidence="1">Belongs to the HisA/HisF family.</text>
</comment>
<accession>B4SX46</accession>
<keyword id="KW-0028">Amino-acid biosynthesis</keyword>
<keyword id="KW-0963">Cytoplasm</keyword>
<keyword id="KW-0368">Histidine biosynthesis</keyword>
<keyword id="KW-0456">Lyase</keyword>
<reference key="1">
    <citation type="journal article" date="2011" name="J. Bacteriol.">
        <title>Comparative genomics of 28 Salmonella enterica isolates: evidence for CRISPR-mediated adaptive sublineage evolution.</title>
        <authorList>
            <person name="Fricke W.F."/>
            <person name="Mammel M.K."/>
            <person name="McDermott P.F."/>
            <person name="Tartera C."/>
            <person name="White D.G."/>
            <person name="Leclerc J.E."/>
            <person name="Ravel J."/>
            <person name="Cebula T.A."/>
        </authorList>
    </citation>
    <scope>NUCLEOTIDE SEQUENCE [LARGE SCALE GENOMIC DNA]</scope>
    <source>
        <strain>SL254</strain>
    </source>
</reference>
<sequence>MLAKRIIPCLDVRDGQVVKGVQFRNHEIIGDIVPLAKRYADEGADELVFYDITASSDGRVVDKSWVARVAEVIDIPFCVAGGIRSIDDAAKILSFGADKISINSPALADPTLITRLADRFGVQCIVVGIDTWFDDATGKYHVNQYTGDENRTRVTQWETLDWVQEVQQRGAGEIVLNMMNQDGVRNGYDLTQLKKVRDVCRVPLIASGGAGTMEHFLEAFRDADVDGALAASVFHKQIINIGELKAYLAGQGVEIRIC</sequence>
<gene>
    <name evidence="1" type="primary">hisF</name>
    <name type="ordered locus">SNSL254_A2256</name>
</gene>
<evidence type="ECO:0000255" key="1">
    <source>
        <dbReference type="HAMAP-Rule" id="MF_01013"/>
    </source>
</evidence>
<feature type="chain" id="PRO_1000190603" description="Imidazole glycerol phosphate synthase subunit HisF">
    <location>
        <begin position="1"/>
        <end position="258"/>
    </location>
</feature>
<feature type="active site" evidence="1">
    <location>
        <position position="11"/>
    </location>
</feature>
<feature type="active site" evidence="1">
    <location>
        <position position="130"/>
    </location>
</feature>
<organism>
    <name type="scientific">Salmonella newport (strain SL254)</name>
    <dbReference type="NCBI Taxonomy" id="423368"/>
    <lineage>
        <taxon>Bacteria</taxon>
        <taxon>Pseudomonadati</taxon>
        <taxon>Pseudomonadota</taxon>
        <taxon>Gammaproteobacteria</taxon>
        <taxon>Enterobacterales</taxon>
        <taxon>Enterobacteriaceae</taxon>
        <taxon>Salmonella</taxon>
    </lineage>
</organism>
<dbReference type="EC" id="4.3.2.10" evidence="1"/>
<dbReference type="EMBL" id="CP001113">
    <property type="protein sequence ID" value="ACF65680.1"/>
    <property type="molecule type" value="Genomic_DNA"/>
</dbReference>
<dbReference type="RefSeq" id="WP_000880125.1">
    <property type="nucleotide sequence ID" value="NZ_CCMR01000002.1"/>
</dbReference>
<dbReference type="SMR" id="B4SX46"/>
<dbReference type="KEGG" id="see:SNSL254_A2256"/>
<dbReference type="HOGENOM" id="CLU_048577_4_0_6"/>
<dbReference type="UniPathway" id="UPA00031">
    <property type="reaction ID" value="UER00010"/>
</dbReference>
<dbReference type="Proteomes" id="UP000008824">
    <property type="component" value="Chromosome"/>
</dbReference>
<dbReference type="GO" id="GO:0005737">
    <property type="term" value="C:cytoplasm"/>
    <property type="evidence" value="ECO:0007669"/>
    <property type="project" value="UniProtKB-SubCell"/>
</dbReference>
<dbReference type="GO" id="GO:0000107">
    <property type="term" value="F:imidazoleglycerol-phosphate synthase activity"/>
    <property type="evidence" value="ECO:0007669"/>
    <property type="project" value="UniProtKB-UniRule"/>
</dbReference>
<dbReference type="GO" id="GO:0016829">
    <property type="term" value="F:lyase activity"/>
    <property type="evidence" value="ECO:0007669"/>
    <property type="project" value="UniProtKB-KW"/>
</dbReference>
<dbReference type="GO" id="GO:0000105">
    <property type="term" value="P:L-histidine biosynthetic process"/>
    <property type="evidence" value="ECO:0007669"/>
    <property type="project" value="UniProtKB-UniRule"/>
</dbReference>
<dbReference type="CDD" id="cd04731">
    <property type="entry name" value="HisF"/>
    <property type="match status" value="1"/>
</dbReference>
<dbReference type="FunFam" id="3.20.20.70:FF:000006">
    <property type="entry name" value="Imidazole glycerol phosphate synthase subunit HisF"/>
    <property type="match status" value="1"/>
</dbReference>
<dbReference type="Gene3D" id="3.20.20.70">
    <property type="entry name" value="Aldolase class I"/>
    <property type="match status" value="1"/>
</dbReference>
<dbReference type="HAMAP" id="MF_01013">
    <property type="entry name" value="HisF"/>
    <property type="match status" value="1"/>
</dbReference>
<dbReference type="InterPro" id="IPR013785">
    <property type="entry name" value="Aldolase_TIM"/>
</dbReference>
<dbReference type="InterPro" id="IPR006062">
    <property type="entry name" value="His_biosynth"/>
</dbReference>
<dbReference type="InterPro" id="IPR004651">
    <property type="entry name" value="HisF"/>
</dbReference>
<dbReference type="InterPro" id="IPR050064">
    <property type="entry name" value="IGPS_HisA/HisF"/>
</dbReference>
<dbReference type="InterPro" id="IPR011060">
    <property type="entry name" value="RibuloseP-bd_barrel"/>
</dbReference>
<dbReference type="NCBIfam" id="TIGR00735">
    <property type="entry name" value="hisF"/>
    <property type="match status" value="1"/>
</dbReference>
<dbReference type="PANTHER" id="PTHR21235:SF2">
    <property type="entry name" value="IMIDAZOLE GLYCEROL PHOSPHATE SYNTHASE HISHF"/>
    <property type="match status" value="1"/>
</dbReference>
<dbReference type="PANTHER" id="PTHR21235">
    <property type="entry name" value="IMIDAZOLE GLYCEROL PHOSPHATE SYNTHASE SUBUNIT HISF/H IGP SYNTHASE SUBUNIT HISF/H"/>
    <property type="match status" value="1"/>
</dbReference>
<dbReference type="Pfam" id="PF00977">
    <property type="entry name" value="His_biosynth"/>
    <property type="match status" value="1"/>
</dbReference>
<dbReference type="SUPFAM" id="SSF51366">
    <property type="entry name" value="Ribulose-phoshate binding barrel"/>
    <property type="match status" value="1"/>
</dbReference>
<name>HIS6_SALNS</name>